<organism>
    <name type="scientific">Rattus norvegicus</name>
    <name type="common">Rat</name>
    <dbReference type="NCBI Taxonomy" id="10116"/>
    <lineage>
        <taxon>Eukaryota</taxon>
        <taxon>Metazoa</taxon>
        <taxon>Chordata</taxon>
        <taxon>Craniata</taxon>
        <taxon>Vertebrata</taxon>
        <taxon>Euteleostomi</taxon>
        <taxon>Mammalia</taxon>
        <taxon>Eutheria</taxon>
        <taxon>Euarchontoglires</taxon>
        <taxon>Glires</taxon>
        <taxon>Rodentia</taxon>
        <taxon>Myomorpha</taxon>
        <taxon>Muroidea</taxon>
        <taxon>Muridae</taxon>
        <taxon>Murinae</taxon>
        <taxon>Rattus</taxon>
    </lineage>
</organism>
<accession>A7VL23</accession>
<feature type="chain" id="PRO_0000312595" description="Calcium-activated potassium channel subunit beta-3">
    <location>
        <begin position="1"/>
        <end position="239"/>
    </location>
</feature>
<feature type="topological domain" description="Cytoplasmic" evidence="2">
    <location>
        <begin position="1"/>
        <end position="51"/>
    </location>
</feature>
<feature type="transmembrane region" description="Helical" evidence="2">
    <location>
        <begin position="52"/>
        <end position="72"/>
    </location>
</feature>
<feature type="topological domain" description="Extracellular" evidence="2">
    <location>
        <begin position="73"/>
        <end position="197"/>
    </location>
</feature>
<feature type="transmembrane region" description="Helical" evidence="2">
    <location>
        <begin position="198"/>
        <end position="218"/>
    </location>
</feature>
<feature type="topological domain" description="Cytoplasmic" evidence="2">
    <location>
        <begin position="219"/>
        <end position="239"/>
    </location>
</feature>
<feature type="region of interest" description="Disordered" evidence="3">
    <location>
        <begin position="15"/>
        <end position="38"/>
    </location>
</feature>
<feature type="glycosylation site" description="N-linked (GlcNAc...) asparagine" evidence="2">
    <location>
        <position position="86"/>
    </location>
</feature>
<feature type="glycosylation site" description="N-linked (GlcNAc...) asparagine" evidence="2">
    <location>
        <position position="123"/>
    </location>
</feature>
<feature type="glycosylation site" description="N-linked (GlcNAc...) asparagine" evidence="2">
    <location>
        <position position="174"/>
    </location>
</feature>
<evidence type="ECO:0000250" key="1">
    <source>
        <dbReference type="UniProtKB" id="Q9NPA1"/>
    </source>
</evidence>
<evidence type="ECO:0000255" key="2"/>
<evidence type="ECO:0000256" key="3">
    <source>
        <dbReference type="SAM" id="MobiDB-lite"/>
    </source>
</evidence>
<evidence type="ECO:0000305" key="4"/>
<evidence type="ECO:0000312" key="5">
    <source>
        <dbReference type="EMBL" id="BAF79924.1"/>
    </source>
</evidence>
<dbReference type="EMBL" id="AB297662">
    <property type="protein sequence ID" value="BAF79924.1"/>
    <property type="molecule type" value="mRNA"/>
</dbReference>
<dbReference type="RefSeq" id="NP_001098030.1">
    <property type="nucleotide sequence ID" value="NM_001104560.2"/>
</dbReference>
<dbReference type="SMR" id="A7VL23"/>
<dbReference type="FunCoup" id="A7VL23">
    <property type="interactions" value="6"/>
</dbReference>
<dbReference type="STRING" id="10116.ENSRNOP00000055650"/>
<dbReference type="GlyCosmos" id="A7VL23">
    <property type="glycosylation" value="3 sites, No reported glycans"/>
</dbReference>
<dbReference type="GlyGen" id="A7VL23">
    <property type="glycosylation" value="3 sites"/>
</dbReference>
<dbReference type="PaxDb" id="10116-ENSRNOP00000055650"/>
<dbReference type="ABCD" id="A7VL23">
    <property type="antibodies" value="1 sequenced antibody"/>
</dbReference>
<dbReference type="Ensembl" id="ENSRNOT00000058860.3">
    <property type="protein sequence ID" value="ENSRNOP00000055650.2"/>
    <property type="gene ID" value="ENSRNOG00000027836.5"/>
</dbReference>
<dbReference type="GeneID" id="310303"/>
<dbReference type="KEGG" id="rno:310303"/>
<dbReference type="UCSC" id="RGD:1311852">
    <property type="organism name" value="rat"/>
</dbReference>
<dbReference type="AGR" id="RGD:1311852"/>
<dbReference type="CTD" id="27094"/>
<dbReference type="RGD" id="1311852">
    <property type="gene designation" value="Kcnmb3"/>
</dbReference>
<dbReference type="eggNOG" id="ENOG502QR4Z">
    <property type="taxonomic scope" value="Eukaryota"/>
</dbReference>
<dbReference type="GeneTree" id="ENSGT00950000183039"/>
<dbReference type="HOGENOM" id="CLU_085739_1_0_1"/>
<dbReference type="InParanoid" id="A7VL23"/>
<dbReference type="OMA" id="CEKYSAA"/>
<dbReference type="OrthoDB" id="86217at9989"/>
<dbReference type="PhylomeDB" id="A7VL23"/>
<dbReference type="TreeFam" id="TF328589"/>
<dbReference type="Reactome" id="R-RNO-1296052">
    <property type="pathway name" value="Ca2+ activated K+ channels"/>
</dbReference>
<dbReference type="PRO" id="PR:A7VL23"/>
<dbReference type="Proteomes" id="UP000002494">
    <property type="component" value="Chromosome 2"/>
</dbReference>
<dbReference type="Bgee" id="ENSRNOG00000027836">
    <property type="expression patterns" value="Expressed in testis"/>
</dbReference>
<dbReference type="GO" id="GO:0005886">
    <property type="term" value="C:plasma membrane"/>
    <property type="evidence" value="ECO:0000266"/>
    <property type="project" value="RGD"/>
</dbReference>
<dbReference type="GO" id="GO:0008076">
    <property type="term" value="C:voltage-gated potassium channel complex"/>
    <property type="evidence" value="ECO:0000266"/>
    <property type="project" value="RGD"/>
</dbReference>
<dbReference type="GO" id="GO:0015269">
    <property type="term" value="F:calcium-activated potassium channel activity"/>
    <property type="evidence" value="ECO:0000266"/>
    <property type="project" value="RGD"/>
</dbReference>
<dbReference type="GO" id="GO:0015459">
    <property type="term" value="F:potassium channel regulator activity"/>
    <property type="evidence" value="ECO:0000318"/>
    <property type="project" value="GO_Central"/>
</dbReference>
<dbReference type="GO" id="GO:0001508">
    <property type="term" value="P:action potential"/>
    <property type="evidence" value="ECO:0000266"/>
    <property type="project" value="RGD"/>
</dbReference>
<dbReference type="GO" id="GO:0005513">
    <property type="term" value="P:detection of calcium ion"/>
    <property type="evidence" value="ECO:0000266"/>
    <property type="project" value="RGD"/>
</dbReference>
<dbReference type="GO" id="GO:0019228">
    <property type="term" value="P:neuronal action potential"/>
    <property type="evidence" value="ECO:0000266"/>
    <property type="project" value="RGD"/>
</dbReference>
<dbReference type="GO" id="GO:0006813">
    <property type="term" value="P:potassium ion transport"/>
    <property type="evidence" value="ECO:0000266"/>
    <property type="project" value="RGD"/>
</dbReference>
<dbReference type="InterPro" id="IPR003930">
    <property type="entry name" value="K_chnl_Ca-activ_BK_bsu"/>
</dbReference>
<dbReference type="PANTHER" id="PTHR10258">
    <property type="entry name" value="CALCIUM-ACTIVATED POTASSIUM CHANNEL SUBUNIT BETA"/>
    <property type="match status" value="1"/>
</dbReference>
<dbReference type="PANTHER" id="PTHR10258:SF4">
    <property type="entry name" value="CALCIUM-ACTIVATED POTASSIUM CHANNEL SUBUNIT BETA-3"/>
    <property type="match status" value="1"/>
</dbReference>
<dbReference type="Pfam" id="PF03185">
    <property type="entry name" value="CaKB"/>
    <property type="match status" value="1"/>
</dbReference>
<proteinExistence type="evidence at transcript level"/>
<keyword id="KW-1015">Disulfide bond</keyword>
<keyword id="KW-0325">Glycoprotein</keyword>
<keyword id="KW-0407">Ion channel</keyword>
<keyword id="KW-0406">Ion transport</keyword>
<keyword id="KW-0472">Membrane</keyword>
<keyword id="KW-1185">Reference proteome</keyword>
<keyword id="KW-0812">Transmembrane</keyword>
<keyword id="KW-1133">Transmembrane helix</keyword>
<keyword id="KW-0813">Transport</keyword>
<sequence>MQPFSIPVQITLQGGRRRQGRTALPASGISNGDPLKVHPKLPSSAGEDRATLLGIAMMASSVLMFFLLGTTVLKPFMLSSPREESNCTTVHTHIADDWLDFAFTCEGSCQGQGTYPCLQVFVNLSHSGQKVLLHYDEEAIRTNPKCFYTPKCHGDRDHLLNSALDIKEFFDHNNGTFPCFYSPDGPLGVVLRKSGHKVVFHCLFWPLLTLLGGALIVGLVRLTQHLSFQCEKYRAVVRA</sequence>
<gene>
    <name evidence="5" type="primary">Kcnmb3</name>
</gene>
<comment type="function">
    <text evidence="1">Regulatory subunit of the calcium activated potassium KCNMA1 (maxiK) channel. Modulates the calcium sensitivity and gating kinetics of KCNMA1, thereby contributing to KCNMA1 channel diversity. Alters the functional properties of the current expressed by the KCNMA1 channel. May partially inactivate the current of KCNBMA. Two or more subunits of KCNMB3 are required to block the KCNMA1 tetramer (By similarity).</text>
</comment>
<comment type="subunit">
    <text evidence="1">Interacts with KCNMA1 tetramer. There are probably 4 molecules of KCMNB3 per KCNMA1 tetramer (By similarity).</text>
</comment>
<comment type="subcellular location">
    <subcellularLocation>
        <location evidence="1">Membrane</location>
        <topology evidence="1">Multi-pass membrane protein</topology>
    </subcellularLocation>
</comment>
<comment type="domain">
    <text evidence="1">The extracellular domain forms gates to block ion permeation, providing a mechanism by which current can be rapidly diminished upon cellular repolarization.</text>
</comment>
<comment type="PTM">
    <text evidence="1">N-glycosylated.</text>
</comment>
<comment type="PTM">
    <text evidence="1">The extracellular domain contains disulfide bond essential for the gating mechanism.</text>
</comment>
<comment type="similarity">
    <text evidence="4">Belongs to the KCNMB (TC 8.A.14.1) family. KCNMB3 subfamily.</text>
</comment>
<reference evidence="5" key="1">
    <citation type="submission" date="2007-03" db="EMBL/GenBank/DDBJ databases">
        <title>Potassium large conductance calcium-activated channel, subfamily M, beta member 3 (Kcnmb3).</title>
        <authorList>
            <person name="Ishii H."/>
            <person name="Usui S."/>
            <person name="Sakuma Y."/>
        </authorList>
    </citation>
    <scope>NUCLEOTIDE SEQUENCE [MRNA]</scope>
    <source>
        <strain>Wistar</strain>
        <tissue>Testis</tissue>
    </source>
</reference>
<protein>
    <recommendedName>
        <fullName>Calcium-activated potassium channel subunit beta-3</fullName>
    </recommendedName>
    <alternativeName>
        <fullName>Calcium-activated potassium channel subfamily M subunit beta-3</fullName>
    </alternativeName>
    <alternativeName>
        <fullName>Maxi K channel subunit beta-3</fullName>
    </alternativeName>
</protein>
<name>KCMB3_RAT</name>